<gene>
    <name type="primary">OR6S1</name>
</gene>
<sequence>MSPDGNHSSDPTEFVLAGLPNLNSARVELFSVFLLVYLLNLTGNVLIVGVVRADTRLQTPMYFFLGNLSCLEILLTSVIIPKMLSNFLSRQHTISFAACITQFYFYFFLGASEFLLLAVMSADRYLAICHPLRYPLLMSGAVCFRVALACWVGGLVPVLGPTVAVALLPFCKQGAVVQHFFCDSGPLLRLACTNTKKLEETDFVLASLVIVSSLLITAVSYGLIVLAVLSIPSASGRQKAFSTCTSHLIVVTLFYGSAIFLYVRPSQSGSVDTNWAVTVITTFVTPLLNPFIYALRNEQVKEALKDMFRKVVAGVLGNLLLDKCLSEKAVK</sequence>
<organism>
    <name type="scientific">Homo sapiens</name>
    <name type="common">Human</name>
    <dbReference type="NCBI Taxonomy" id="9606"/>
    <lineage>
        <taxon>Eukaryota</taxon>
        <taxon>Metazoa</taxon>
        <taxon>Chordata</taxon>
        <taxon>Craniata</taxon>
        <taxon>Vertebrata</taxon>
        <taxon>Euteleostomi</taxon>
        <taxon>Mammalia</taxon>
        <taxon>Eutheria</taxon>
        <taxon>Euarchontoglires</taxon>
        <taxon>Primates</taxon>
        <taxon>Haplorrhini</taxon>
        <taxon>Catarrhini</taxon>
        <taxon>Hominidae</taxon>
        <taxon>Homo</taxon>
    </lineage>
</organism>
<keyword id="KW-1003">Cell membrane</keyword>
<keyword id="KW-1015">Disulfide bond</keyword>
<keyword id="KW-0297">G-protein coupled receptor</keyword>
<keyword id="KW-0325">Glycoprotein</keyword>
<keyword id="KW-0472">Membrane</keyword>
<keyword id="KW-0552">Olfaction</keyword>
<keyword id="KW-0675">Receptor</keyword>
<keyword id="KW-1185">Reference proteome</keyword>
<keyword id="KW-0716">Sensory transduction</keyword>
<keyword id="KW-0807">Transducer</keyword>
<keyword id="KW-0812">Transmembrane</keyword>
<keyword id="KW-1133">Transmembrane helix</keyword>
<protein>
    <recommendedName>
        <fullName>Olfactory receptor 6S1</fullName>
    </recommendedName>
    <alternativeName>
        <fullName>Olfactory receptor OR14-37</fullName>
    </alternativeName>
</protein>
<accession>Q8NH40</accession>
<accession>Q6IFJ9</accession>
<dbReference type="EMBL" id="AB065561">
    <property type="protein sequence ID" value="BAC05799.1"/>
    <property type="status" value="ALT_SEQ"/>
    <property type="molecule type" value="Genomic_DNA"/>
</dbReference>
<dbReference type="EMBL" id="BK004263">
    <property type="protein sequence ID" value="DAA04661.1"/>
    <property type="molecule type" value="Genomic_DNA"/>
</dbReference>
<dbReference type="CCDS" id="CCDS32038.1"/>
<dbReference type="RefSeq" id="NP_001001968.1">
    <property type="nucleotide sequence ID" value="NM_001001968.1"/>
</dbReference>
<dbReference type="SMR" id="Q8NH40"/>
<dbReference type="BioGRID" id="131156">
    <property type="interactions" value="1"/>
</dbReference>
<dbReference type="FunCoup" id="Q8NH40">
    <property type="interactions" value="417"/>
</dbReference>
<dbReference type="STRING" id="9606.ENSP00000313110"/>
<dbReference type="GlyCosmos" id="Q8NH40">
    <property type="glycosylation" value="1 site, No reported glycans"/>
</dbReference>
<dbReference type="GlyGen" id="Q8NH40">
    <property type="glycosylation" value="2 sites"/>
</dbReference>
<dbReference type="BioMuta" id="OR6S1"/>
<dbReference type="DMDM" id="223590119"/>
<dbReference type="MassIVE" id="Q8NH40"/>
<dbReference type="PaxDb" id="9606-ENSP00000313110"/>
<dbReference type="ProteomicsDB" id="73653"/>
<dbReference type="Antibodypedia" id="57711">
    <property type="antibodies" value="103 antibodies from 20 providers"/>
</dbReference>
<dbReference type="DNASU" id="341799"/>
<dbReference type="Ensembl" id="ENST00000320704.3">
    <property type="protein sequence ID" value="ENSP00000313110.3"/>
    <property type="gene ID" value="ENSG00000181803.3"/>
</dbReference>
<dbReference type="GeneID" id="341799"/>
<dbReference type="KEGG" id="hsa:341799"/>
<dbReference type="MANE-Select" id="ENST00000320704.3">
    <property type="protein sequence ID" value="ENSP00000313110.3"/>
    <property type="RefSeq nucleotide sequence ID" value="NM_001001968.1"/>
    <property type="RefSeq protein sequence ID" value="NP_001001968.1"/>
</dbReference>
<dbReference type="UCSC" id="uc001vxv.1">
    <property type="organism name" value="human"/>
</dbReference>
<dbReference type="AGR" id="HGNC:15363"/>
<dbReference type="CTD" id="341799"/>
<dbReference type="GeneCards" id="OR6S1"/>
<dbReference type="HGNC" id="HGNC:15363">
    <property type="gene designation" value="OR6S1"/>
</dbReference>
<dbReference type="HPA" id="ENSG00000181803">
    <property type="expression patterns" value="Not detected"/>
</dbReference>
<dbReference type="neXtProt" id="NX_Q8NH40"/>
<dbReference type="PharmGKB" id="PA32604"/>
<dbReference type="VEuPathDB" id="HostDB:ENSG00000181803"/>
<dbReference type="eggNOG" id="ENOG502SFXX">
    <property type="taxonomic scope" value="Eukaryota"/>
</dbReference>
<dbReference type="GeneTree" id="ENSGT01090000260086"/>
<dbReference type="HOGENOM" id="CLU_012526_0_1_1"/>
<dbReference type="InParanoid" id="Q8NH40"/>
<dbReference type="OMA" id="MGGLFPV"/>
<dbReference type="OrthoDB" id="9902777at2759"/>
<dbReference type="PAN-GO" id="Q8NH40">
    <property type="GO annotations" value="1 GO annotation based on evolutionary models"/>
</dbReference>
<dbReference type="PhylomeDB" id="Q8NH40"/>
<dbReference type="TreeFam" id="TF336833"/>
<dbReference type="PathwayCommons" id="Q8NH40"/>
<dbReference type="Reactome" id="R-HSA-9752946">
    <property type="pathway name" value="Expression and translocation of olfactory receptors"/>
</dbReference>
<dbReference type="BioGRID-ORCS" id="341799">
    <property type="hits" value="7 hits in 749 CRISPR screens"/>
</dbReference>
<dbReference type="GeneWiki" id="OR6S1"/>
<dbReference type="GenomeRNAi" id="341799"/>
<dbReference type="Pharos" id="Q8NH40">
    <property type="development level" value="Tdark"/>
</dbReference>
<dbReference type="PRO" id="PR:Q8NH40"/>
<dbReference type="Proteomes" id="UP000005640">
    <property type="component" value="Chromosome 14"/>
</dbReference>
<dbReference type="RNAct" id="Q8NH40">
    <property type="molecule type" value="protein"/>
</dbReference>
<dbReference type="Bgee" id="ENSG00000181803">
    <property type="expression patterns" value="Expressed in lymph node and 1 other cell type or tissue"/>
</dbReference>
<dbReference type="GO" id="GO:0005886">
    <property type="term" value="C:plasma membrane"/>
    <property type="evidence" value="ECO:0007669"/>
    <property type="project" value="UniProtKB-SubCell"/>
</dbReference>
<dbReference type="GO" id="GO:0004930">
    <property type="term" value="F:G protein-coupled receptor activity"/>
    <property type="evidence" value="ECO:0007669"/>
    <property type="project" value="UniProtKB-KW"/>
</dbReference>
<dbReference type="GO" id="GO:0004984">
    <property type="term" value="F:olfactory receptor activity"/>
    <property type="evidence" value="ECO:0000318"/>
    <property type="project" value="GO_Central"/>
</dbReference>
<dbReference type="CDD" id="cd15912">
    <property type="entry name" value="7tmA_OR6C-like"/>
    <property type="match status" value="1"/>
</dbReference>
<dbReference type="FunFam" id="1.20.1070.10:FF:000010">
    <property type="entry name" value="Olfactory receptor"/>
    <property type="match status" value="1"/>
</dbReference>
<dbReference type="Gene3D" id="1.20.1070.10">
    <property type="entry name" value="Rhodopsin 7-helix transmembrane proteins"/>
    <property type="match status" value="1"/>
</dbReference>
<dbReference type="InterPro" id="IPR000276">
    <property type="entry name" value="GPCR_Rhodpsn"/>
</dbReference>
<dbReference type="InterPro" id="IPR017452">
    <property type="entry name" value="GPCR_Rhodpsn_7TM"/>
</dbReference>
<dbReference type="InterPro" id="IPR000725">
    <property type="entry name" value="Olfact_rcpt"/>
</dbReference>
<dbReference type="InterPro" id="IPR047132">
    <property type="entry name" value="Olfact_rcpt_6C-like"/>
</dbReference>
<dbReference type="PANTHER" id="PTHR26454">
    <property type="entry name" value="OLFACTORY RECEPTOR"/>
    <property type="match status" value="1"/>
</dbReference>
<dbReference type="PANTHER" id="PTHR26454:SF7">
    <property type="entry name" value="OLFACTORY RECEPTOR 6S1"/>
    <property type="match status" value="1"/>
</dbReference>
<dbReference type="Pfam" id="PF13853">
    <property type="entry name" value="7tm_4"/>
    <property type="match status" value="1"/>
</dbReference>
<dbReference type="PRINTS" id="PR00237">
    <property type="entry name" value="GPCRRHODOPSN"/>
</dbReference>
<dbReference type="PRINTS" id="PR00245">
    <property type="entry name" value="OLFACTORYR"/>
</dbReference>
<dbReference type="SUPFAM" id="SSF81321">
    <property type="entry name" value="Family A G protein-coupled receptor-like"/>
    <property type="match status" value="1"/>
</dbReference>
<dbReference type="PROSITE" id="PS00237">
    <property type="entry name" value="G_PROTEIN_RECEP_F1_1"/>
    <property type="match status" value="1"/>
</dbReference>
<dbReference type="PROSITE" id="PS50262">
    <property type="entry name" value="G_PROTEIN_RECEP_F1_2"/>
    <property type="match status" value="1"/>
</dbReference>
<name>OR6S1_HUMAN</name>
<evidence type="ECO:0000255" key="1"/>
<evidence type="ECO:0000255" key="2">
    <source>
        <dbReference type="PROSITE-ProRule" id="PRU00521"/>
    </source>
</evidence>
<evidence type="ECO:0000305" key="3"/>
<reference key="1">
    <citation type="submission" date="2001-07" db="EMBL/GenBank/DDBJ databases">
        <title>Genome-wide discovery and analysis of human seven transmembrane helix receptor genes.</title>
        <authorList>
            <person name="Suwa M."/>
            <person name="Sato T."/>
            <person name="Okouchi I."/>
            <person name="Arita M."/>
            <person name="Futami K."/>
            <person name="Matsumoto S."/>
            <person name="Tsutsumi S."/>
            <person name="Aburatani H."/>
            <person name="Asai K."/>
            <person name="Akiyama Y."/>
        </authorList>
    </citation>
    <scope>NUCLEOTIDE SEQUENCE [GENOMIC DNA]</scope>
</reference>
<reference key="2">
    <citation type="journal article" date="2004" name="Proc. Natl. Acad. Sci. U.S.A.">
        <title>The human olfactory receptor gene family.</title>
        <authorList>
            <person name="Malnic B."/>
            <person name="Godfrey P.A."/>
            <person name="Buck L.B."/>
        </authorList>
    </citation>
    <scope>IDENTIFICATION</scope>
</reference>
<reference key="3">
    <citation type="journal article" date="2004" name="Proc. Natl. Acad. Sci. U.S.A.">
        <authorList>
            <person name="Malnic B."/>
            <person name="Godfrey P.A."/>
            <person name="Buck L.B."/>
        </authorList>
    </citation>
    <scope>ERRATUM OF PUBMED:14983052</scope>
</reference>
<proteinExistence type="inferred from homology"/>
<feature type="chain" id="PRO_0000150637" description="Olfactory receptor 6S1">
    <location>
        <begin position="1"/>
        <end position="331"/>
    </location>
</feature>
<feature type="topological domain" description="Extracellular" evidence="1">
    <location>
        <begin position="1"/>
        <end position="29"/>
    </location>
</feature>
<feature type="transmembrane region" description="Helical; Name=1" evidence="1">
    <location>
        <begin position="30"/>
        <end position="50"/>
    </location>
</feature>
<feature type="topological domain" description="Cytoplasmic" evidence="1">
    <location>
        <begin position="51"/>
        <end position="59"/>
    </location>
</feature>
<feature type="transmembrane region" description="Helical; Name=2" evidence="1">
    <location>
        <begin position="60"/>
        <end position="80"/>
    </location>
</feature>
<feature type="topological domain" description="Extracellular" evidence="1">
    <location>
        <begin position="81"/>
        <end position="99"/>
    </location>
</feature>
<feature type="transmembrane region" description="Helical; Name=3" evidence="1">
    <location>
        <begin position="100"/>
        <end position="120"/>
    </location>
</feature>
<feature type="topological domain" description="Cytoplasmic" evidence="1">
    <location>
        <begin position="121"/>
        <end position="147"/>
    </location>
</feature>
<feature type="transmembrane region" description="Helical; Name=4" evidence="1">
    <location>
        <begin position="148"/>
        <end position="168"/>
    </location>
</feature>
<feature type="topological domain" description="Extracellular" evidence="1">
    <location>
        <begin position="169"/>
        <end position="207"/>
    </location>
</feature>
<feature type="transmembrane region" description="Helical; Name=5" evidence="1">
    <location>
        <begin position="208"/>
        <end position="228"/>
    </location>
</feature>
<feature type="topological domain" description="Cytoplasmic" evidence="1">
    <location>
        <begin position="229"/>
        <end position="242"/>
    </location>
</feature>
<feature type="transmembrane region" description="Helical; Name=6" evidence="1">
    <location>
        <begin position="243"/>
        <end position="263"/>
    </location>
</feature>
<feature type="topological domain" description="Extracellular" evidence="1">
    <location>
        <begin position="264"/>
        <end position="274"/>
    </location>
</feature>
<feature type="transmembrane region" description="Helical; Name=7" evidence="1">
    <location>
        <begin position="275"/>
        <end position="295"/>
    </location>
</feature>
<feature type="topological domain" description="Cytoplasmic" evidence="1">
    <location>
        <begin position="296"/>
        <end position="331"/>
    </location>
</feature>
<feature type="glycosylation site" description="N-linked (GlcNAc...) asparagine" evidence="1">
    <location>
        <position position="6"/>
    </location>
</feature>
<feature type="disulfide bond" evidence="2">
    <location>
        <begin position="99"/>
        <end position="182"/>
    </location>
</feature>
<feature type="sequence variant" id="VAR_057562" description="In dbSNP:rs11622794.">
    <original>T</original>
    <variation>I</variation>
    <location>
        <position position="42"/>
    </location>
</feature>
<feature type="sequence variant" id="VAR_057563" description="In dbSNP:rs11622969.">
    <original>V</original>
    <variation>I</variation>
    <location>
        <position position="156"/>
    </location>
</feature>
<feature type="sequence variant" id="VAR_057564" description="In dbSNP:rs17277522.">
    <original>R</original>
    <variation>H</variation>
    <location>
        <position position="237"/>
    </location>
</feature>
<feature type="sequence variant" id="VAR_057565" description="In dbSNP:rs17114309.">
    <original>R</original>
    <variation>C</variation>
    <location>
        <position position="296"/>
    </location>
</feature>
<comment type="function">
    <text evidence="3">Odorant receptor.</text>
</comment>
<comment type="subcellular location">
    <subcellularLocation>
        <location>Cell membrane</location>
        <topology>Multi-pass membrane protein</topology>
    </subcellularLocation>
</comment>
<comment type="similarity">
    <text evidence="2">Belongs to the G-protein coupled receptor 1 family.</text>
</comment>
<comment type="sequence caution" evidence="3">
    <conflict type="erroneous gene model prediction">
        <sequence resource="EMBL-CDS" id="BAC05799"/>
    </conflict>
</comment>
<comment type="online information" name="Human Olfactory Receptor Data Exploratorium (HORDE)">
    <link uri="http://genome.weizmann.ac.il/horde/card/index/symbol:OR6S1"/>
</comment>